<organism>
    <name type="scientific">Dasypus novemcinctus</name>
    <name type="common">Nine-banded armadillo</name>
    <dbReference type="NCBI Taxonomy" id="9361"/>
    <lineage>
        <taxon>Eukaryota</taxon>
        <taxon>Metazoa</taxon>
        <taxon>Chordata</taxon>
        <taxon>Craniata</taxon>
        <taxon>Vertebrata</taxon>
        <taxon>Euteleostomi</taxon>
        <taxon>Mammalia</taxon>
        <taxon>Eutheria</taxon>
        <taxon>Xenarthra</taxon>
        <taxon>Cingulata</taxon>
        <taxon>Dasypodidae</taxon>
        <taxon>Dasypus</taxon>
    </lineage>
</organism>
<dbReference type="EMBL" id="Y11832">
    <property type="protein sequence ID" value="CAA72528.1"/>
    <property type="molecule type" value="Genomic_DNA"/>
</dbReference>
<dbReference type="PIR" id="T11446">
    <property type="entry name" value="T11446"/>
</dbReference>
<dbReference type="RefSeq" id="NP_007464.1">
    <property type="nucleotide sequence ID" value="NC_001821.1"/>
</dbReference>
<dbReference type="SMR" id="O21330"/>
<dbReference type="GeneID" id="808125"/>
<dbReference type="KEGG" id="dnm:808125"/>
<dbReference type="CTD" id="4508"/>
<dbReference type="HOGENOM" id="CLU_041018_0_2_1"/>
<dbReference type="OMA" id="FFDQFMS"/>
<dbReference type="GO" id="GO:0005743">
    <property type="term" value="C:mitochondrial inner membrane"/>
    <property type="evidence" value="ECO:0007669"/>
    <property type="project" value="UniProtKB-SubCell"/>
</dbReference>
<dbReference type="GO" id="GO:0045259">
    <property type="term" value="C:proton-transporting ATP synthase complex"/>
    <property type="evidence" value="ECO:0000250"/>
    <property type="project" value="UniProtKB"/>
</dbReference>
<dbReference type="GO" id="GO:0015252">
    <property type="term" value="F:proton channel activity"/>
    <property type="evidence" value="ECO:0000250"/>
    <property type="project" value="UniProtKB"/>
</dbReference>
<dbReference type="GO" id="GO:0046933">
    <property type="term" value="F:proton-transporting ATP synthase activity, rotational mechanism"/>
    <property type="evidence" value="ECO:0007669"/>
    <property type="project" value="Ensembl"/>
</dbReference>
<dbReference type="GO" id="GO:0015986">
    <property type="term" value="P:proton motive force-driven ATP synthesis"/>
    <property type="evidence" value="ECO:0000250"/>
    <property type="project" value="UniProtKB"/>
</dbReference>
<dbReference type="GO" id="GO:0042776">
    <property type="term" value="P:proton motive force-driven mitochondrial ATP synthesis"/>
    <property type="evidence" value="ECO:0007669"/>
    <property type="project" value="Ensembl"/>
</dbReference>
<dbReference type="GO" id="GO:1902600">
    <property type="term" value="P:proton transmembrane transport"/>
    <property type="evidence" value="ECO:0000250"/>
    <property type="project" value="UniProtKB"/>
</dbReference>
<dbReference type="CDD" id="cd00310">
    <property type="entry name" value="ATP-synt_Fo_a_6"/>
    <property type="match status" value="1"/>
</dbReference>
<dbReference type="FunFam" id="1.20.120.220:FF:000004">
    <property type="entry name" value="ATP synthase subunit a"/>
    <property type="match status" value="1"/>
</dbReference>
<dbReference type="Gene3D" id="1.20.120.220">
    <property type="entry name" value="ATP synthase, F0 complex, subunit A"/>
    <property type="match status" value="1"/>
</dbReference>
<dbReference type="InterPro" id="IPR000568">
    <property type="entry name" value="ATP_synth_F0_asu"/>
</dbReference>
<dbReference type="InterPro" id="IPR023011">
    <property type="entry name" value="ATP_synth_F0_asu_AS"/>
</dbReference>
<dbReference type="InterPro" id="IPR045083">
    <property type="entry name" value="ATP_synth_F0_asu_bact/mt"/>
</dbReference>
<dbReference type="InterPro" id="IPR035908">
    <property type="entry name" value="F0_ATP_A_sf"/>
</dbReference>
<dbReference type="NCBIfam" id="TIGR01131">
    <property type="entry name" value="ATP_synt_6_or_A"/>
    <property type="match status" value="1"/>
</dbReference>
<dbReference type="PANTHER" id="PTHR11410">
    <property type="entry name" value="ATP SYNTHASE SUBUNIT A"/>
    <property type="match status" value="1"/>
</dbReference>
<dbReference type="PANTHER" id="PTHR11410:SF0">
    <property type="entry name" value="ATP SYNTHASE SUBUNIT A"/>
    <property type="match status" value="1"/>
</dbReference>
<dbReference type="Pfam" id="PF00119">
    <property type="entry name" value="ATP-synt_A"/>
    <property type="match status" value="1"/>
</dbReference>
<dbReference type="PRINTS" id="PR00123">
    <property type="entry name" value="ATPASEA"/>
</dbReference>
<dbReference type="SUPFAM" id="SSF81336">
    <property type="entry name" value="F1F0 ATP synthase subunit A"/>
    <property type="match status" value="1"/>
</dbReference>
<dbReference type="PROSITE" id="PS00449">
    <property type="entry name" value="ATPASE_A"/>
    <property type="match status" value="1"/>
</dbReference>
<reference key="1">
    <citation type="journal article" date="1997" name="Mol. Biol. Evol.">
        <title>Phylogenetic analyses of mitochondrial DNA suggest a sister group relationship between Xenarthra (Edentata) and Ferungulates.</title>
        <authorList>
            <person name="Arnason U."/>
            <person name="Gullberg A."/>
            <person name="Janke A."/>
        </authorList>
    </citation>
    <scope>NUCLEOTIDE SEQUENCE [GENOMIC DNA]</scope>
</reference>
<gene>
    <name evidence="1" type="primary">MT-ATP6</name>
    <name type="synonym">ATP6</name>
    <name type="synonym">ATPASE6</name>
    <name type="synonym">MTATP6</name>
</gene>
<comment type="function">
    <text evidence="1">Subunit a, of the mitochondrial membrane ATP synthase complex (F(1)F(0) ATP synthase or Complex V) that produces ATP from ADP in the presence of a proton gradient across the membrane which is generated by electron transport complexes of the respiratory chain. ATP synthase complex consist of a soluble F(1) head domain - the catalytic core - and a membrane F(1) domain - the membrane proton channel. These two domains are linked by a central stalk rotating inside the F(1) region and a stationary peripheral stalk. During catalysis, ATP synthesis in the catalytic domain of F(1) is coupled via a rotary mechanism of the central stalk subunits to proton translocation. With the subunit c (ATP5MC1), forms the proton-conducting channel in the F(0) domain, that contains two crucial half-channels (inlet and outlet) that facilitate proton movement from the mitochondrial intermembrane space (IMS) into the matrix. Protons are taken up via the inlet half-channel and released through the outlet half-channel, following a Grotthuss mechanism.</text>
</comment>
<comment type="catalytic activity">
    <reaction evidence="1">
        <text>H(+)(in) = H(+)(out)</text>
        <dbReference type="Rhea" id="RHEA:34979"/>
        <dbReference type="ChEBI" id="CHEBI:15378"/>
    </reaction>
</comment>
<comment type="subunit">
    <text evidence="1">Component of the ATP synthase complex composed at least of ATP5F1A/subunit alpha, ATP5F1B/subunit beta, ATP5MC1/subunit c (homooctomer), MT-ATP6/subunit a, MT-ATP8/subunit 8, ATP5ME/subunit e, ATP5MF/subunit f, ATP5MG/subunit g, ATP5MK/subunit k, ATP5MJ/subunit j, ATP5F1C/subunit gamma, ATP5F1D/subunit delta, ATP5F1E/subunit epsilon, ATP5PF/subunit F6, ATP5PB/subunit b, ATP5PD/subunit d, ATP5PO/subunit OSCP. ATP synthase complex consists of a soluble F(1) head domain (subunits alpha(3) and beta(3)) - the catalytic core - and a membrane F(0) domain - the membrane proton channel (subunits c, a, 8, e, f, g, k and j). These two domains are linked by a central stalk (subunits gamma, delta, and epsilon) rotating inside the F1 region and a stationary peripheral stalk (subunits F6, b, d, and OSCP). Interacts with DNAJC30; interaction is direct.</text>
</comment>
<comment type="subcellular location">
    <subcellularLocation>
        <location>Mitochondrion inner membrane</location>
        <topology>Multi-pass membrane protein</topology>
    </subcellularLocation>
</comment>
<comment type="similarity">
    <text evidence="3">Belongs to the ATPase A chain family.</text>
</comment>
<evidence type="ECO:0000250" key="1">
    <source>
        <dbReference type="UniProtKB" id="P00846"/>
    </source>
</evidence>
<evidence type="ECO:0000255" key="2"/>
<evidence type="ECO:0000305" key="3"/>
<name>ATP6_DASNO</name>
<keyword id="KW-0066">ATP synthesis</keyword>
<keyword id="KW-0138">CF(0)</keyword>
<keyword id="KW-0375">Hydrogen ion transport</keyword>
<keyword id="KW-0406">Ion transport</keyword>
<keyword id="KW-0472">Membrane</keyword>
<keyword id="KW-0496">Mitochondrion</keyword>
<keyword id="KW-0999">Mitochondrion inner membrane</keyword>
<keyword id="KW-0812">Transmembrane</keyword>
<keyword id="KW-1133">Transmembrane helix</keyword>
<keyword id="KW-0813">Transport</keyword>
<proteinExistence type="inferred from homology"/>
<feature type="chain" id="PRO_0000082113" description="ATP synthase F(0) complex subunit a">
    <location>
        <begin position="1"/>
        <end position="226"/>
    </location>
</feature>
<feature type="transmembrane region" description="Helical" evidence="2">
    <location>
        <begin position="12"/>
        <end position="32"/>
    </location>
</feature>
<feature type="transmembrane region" description="Helical" evidence="2">
    <location>
        <begin position="68"/>
        <end position="88"/>
    </location>
</feature>
<feature type="transmembrane region" description="Helical" evidence="2">
    <location>
        <begin position="97"/>
        <end position="117"/>
    </location>
</feature>
<feature type="transmembrane region" description="Helical" evidence="2">
    <location>
        <begin position="138"/>
        <end position="158"/>
    </location>
</feature>
<feature type="transmembrane region" description="Helical" evidence="2">
    <location>
        <begin position="164"/>
        <end position="184"/>
    </location>
</feature>
<feature type="transmembrane region" description="Helical" evidence="2">
    <location>
        <begin position="189"/>
        <end position="209"/>
    </location>
</feature>
<protein>
    <recommendedName>
        <fullName evidence="1">ATP synthase F(0) complex subunit a</fullName>
    </recommendedName>
    <alternativeName>
        <fullName>F-ATPase protein 6</fullName>
    </alternativeName>
    <alternativeName>
        <fullName evidence="1">Proton-conducting channel, ATP synthase F(0) complex subunit a</fullName>
    </alternativeName>
</protein>
<sequence length="226" mass="24946">MNENLFASFATPTMMGLPIIMLIIMFPSILFPTPKRMITNRVVSVQQWLINMIMKQMMNIHNNKGRTWTLMLISLITFIGTTNLLGLLPHTFTPTTQLSMNLGMAIPLWAGAVVTGFRHKTKASLAHFLPQGTPIPLIPMLIIIQTISLFIQPMALAVRLTANITAGHLLIHLIGGATLALMSISPTTASITFIILILLTILEFAVALIQAYVFTLLVSLYLHDNT</sequence>
<accession>O21330</accession>
<geneLocation type="mitochondrion"/>